<organism>
    <name type="scientific">Oryza sativa subsp. japonica</name>
    <name type="common">Rice</name>
    <dbReference type="NCBI Taxonomy" id="39947"/>
    <lineage>
        <taxon>Eukaryota</taxon>
        <taxon>Viridiplantae</taxon>
        <taxon>Streptophyta</taxon>
        <taxon>Embryophyta</taxon>
        <taxon>Tracheophyta</taxon>
        <taxon>Spermatophyta</taxon>
        <taxon>Magnoliopsida</taxon>
        <taxon>Liliopsida</taxon>
        <taxon>Poales</taxon>
        <taxon>Poaceae</taxon>
        <taxon>BOP clade</taxon>
        <taxon>Oryzoideae</taxon>
        <taxon>Oryzeae</taxon>
        <taxon>Oryzinae</taxon>
        <taxon>Oryza</taxon>
        <taxon>Oryza sativa</taxon>
    </lineage>
</organism>
<reference key="1">
    <citation type="journal article" date="2005" name="Nature">
        <title>The map-based sequence of the rice genome.</title>
        <authorList>
            <consortium name="International rice genome sequencing project (IRGSP)"/>
        </authorList>
    </citation>
    <scope>NUCLEOTIDE SEQUENCE [LARGE SCALE GENOMIC DNA]</scope>
    <source>
        <strain>cv. Nipponbare</strain>
    </source>
</reference>
<reference key="2">
    <citation type="journal article" date="2013" name="Rice">
        <title>Improvement of the Oryza sativa Nipponbare reference genome using next generation sequence and optical map data.</title>
        <authorList>
            <person name="Kawahara Y."/>
            <person name="de la Bastide M."/>
            <person name="Hamilton J.P."/>
            <person name="Kanamori H."/>
            <person name="McCombie W.R."/>
            <person name="Ouyang S."/>
            <person name="Schwartz D.C."/>
            <person name="Tanaka T."/>
            <person name="Wu J."/>
            <person name="Zhou S."/>
            <person name="Childs K.L."/>
            <person name="Davidson R.M."/>
            <person name="Lin H."/>
            <person name="Quesada-Ocampo L."/>
            <person name="Vaillancourt B."/>
            <person name="Sakai H."/>
            <person name="Lee S.S."/>
            <person name="Kim J."/>
            <person name="Numa H."/>
            <person name="Itoh T."/>
            <person name="Buell C.R."/>
            <person name="Matsumoto T."/>
        </authorList>
    </citation>
    <scope>GENOME REANNOTATION</scope>
    <source>
        <strain>cv. Nipponbare</strain>
    </source>
</reference>
<reference key="3">
    <citation type="journal article" date="2003" name="Science">
        <title>Collection, mapping, and annotation of over 28,000 cDNA clones from japonica rice.</title>
        <authorList>
            <consortium name="The rice full-length cDNA consortium"/>
        </authorList>
    </citation>
    <scope>NUCLEOTIDE SEQUENCE [LARGE SCALE MRNA]</scope>
    <source>
        <strain>cv. Nipponbare</strain>
    </source>
</reference>
<accession>Q5Z8T3</accession>
<comment type="function">
    <text evidence="1">Involved in the biosynthesis of UDP-glucuronic acid (UDP-GlcA), providing nucleotide sugars for cell-wall polymers. May be also involved in plant ascorbate biosynthesis (By similarity).</text>
</comment>
<comment type="catalytic activity">
    <reaction>
        <text>myo-inositol + O2 = D-glucuronate + H2O + H(+)</text>
        <dbReference type="Rhea" id="RHEA:23696"/>
        <dbReference type="ChEBI" id="CHEBI:15377"/>
        <dbReference type="ChEBI" id="CHEBI:15378"/>
        <dbReference type="ChEBI" id="CHEBI:15379"/>
        <dbReference type="ChEBI" id="CHEBI:17268"/>
        <dbReference type="ChEBI" id="CHEBI:58720"/>
        <dbReference type="EC" id="1.13.99.1"/>
    </reaction>
</comment>
<comment type="cofactor">
    <cofactor evidence="1">
        <name>Fe cation</name>
        <dbReference type="ChEBI" id="CHEBI:24875"/>
    </cofactor>
    <text evidence="1">Binds 2 iron ions per subunit.</text>
</comment>
<comment type="pathway">
    <text>Polyol metabolism; myo-inositol degradation into D-glucuronate; D-glucuronate from myo-inositol: step 1/1.</text>
</comment>
<comment type="subcellular location">
    <subcellularLocation>
        <location evidence="1">Cytoplasm</location>
    </subcellularLocation>
</comment>
<comment type="similarity">
    <text evidence="2">Belongs to the myo-inositol oxygenase family.</text>
</comment>
<sequence>MTITIEQPHLDAIADRKVAGGGGGDNAAELVLDGGFVVPDSNAFGNAFRNYEAESERKETVEEFYRVNHINQTYDFVRRMREEYGRVDKTEMGIWECIELLNEFIDDSDPDLDMPQIEHLLQTAEAIRKDFPDEDWLHLTGLIHDLGKVLLHPSFGELPQWSVVGDTFPVGCAFDECNVHFKYFKENPDYLNPKLNTKFGAYSEGCGLDNVLMSWGHDDYMYLVAKENKTTLPSAGLFIIRYHSFYPLHKHGAYMHLMNDEDKENLKWLRVFNKYDLYSKSNERIDVEKVKPYYMSLIEKYFPAKLRW</sequence>
<dbReference type="EC" id="1.13.99.1"/>
<dbReference type="EMBL" id="AP003713">
    <property type="protein sequence ID" value="BAD53740.1"/>
    <property type="molecule type" value="Genomic_DNA"/>
</dbReference>
<dbReference type="EMBL" id="AP003762">
    <property type="protein sequence ID" value="BAD53821.1"/>
    <property type="molecule type" value="Genomic_DNA"/>
</dbReference>
<dbReference type="EMBL" id="AP014962">
    <property type="protein sequence ID" value="BAS98249.1"/>
    <property type="molecule type" value="Genomic_DNA"/>
</dbReference>
<dbReference type="EMBL" id="AK068862">
    <property type="status" value="NOT_ANNOTATED_CDS"/>
    <property type="molecule type" value="mRNA"/>
</dbReference>
<dbReference type="RefSeq" id="XP_015643978.1">
    <property type="nucleotide sequence ID" value="XM_015788492.1"/>
</dbReference>
<dbReference type="SMR" id="Q5Z8T3"/>
<dbReference type="FunCoup" id="Q5Z8T3">
    <property type="interactions" value="952"/>
</dbReference>
<dbReference type="STRING" id="39947.Q5Z8T3"/>
<dbReference type="PaxDb" id="39947-Q5Z8T3"/>
<dbReference type="EnsemblPlants" id="Os06t0561000-01">
    <property type="protein sequence ID" value="Os06t0561000-01"/>
    <property type="gene ID" value="Os06g0561000"/>
</dbReference>
<dbReference type="Gramene" id="Os06t0561000-01">
    <property type="protein sequence ID" value="Os06t0561000-01"/>
    <property type="gene ID" value="Os06g0561000"/>
</dbReference>
<dbReference type="eggNOG" id="KOG1573">
    <property type="taxonomic scope" value="Eukaryota"/>
</dbReference>
<dbReference type="HOGENOM" id="CLU_050259_1_0_1"/>
<dbReference type="InParanoid" id="Q5Z8T3"/>
<dbReference type="OMA" id="RYNTKYG"/>
<dbReference type="OrthoDB" id="5151075at2759"/>
<dbReference type="BRENDA" id="1.13.99.1">
    <property type="organism ID" value="4460"/>
</dbReference>
<dbReference type="PlantReactome" id="R-OSA-1119431">
    <property type="pathway name" value="UDP-D-glucuronate biosynthesis (from myo-inositol)"/>
</dbReference>
<dbReference type="UniPathway" id="UPA00111">
    <property type="reaction ID" value="UER00527"/>
</dbReference>
<dbReference type="Proteomes" id="UP000000763">
    <property type="component" value="Chromosome 6"/>
</dbReference>
<dbReference type="Proteomes" id="UP000059680">
    <property type="component" value="Chromosome 6"/>
</dbReference>
<dbReference type="ExpressionAtlas" id="Q5Z8T3">
    <property type="expression patterns" value="baseline and differential"/>
</dbReference>
<dbReference type="GO" id="GO:0005737">
    <property type="term" value="C:cytoplasm"/>
    <property type="evidence" value="ECO:0007669"/>
    <property type="project" value="UniProtKB-SubCell"/>
</dbReference>
<dbReference type="GO" id="GO:0050113">
    <property type="term" value="F:inositol oxygenase activity"/>
    <property type="evidence" value="ECO:0000318"/>
    <property type="project" value="GO_Central"/>
</dbReference>
<dbReference type="GO" id="GO:0005506">
    <property type="term" value="F:iron ion binding"/>
    <property type="evidence" value="ECO:0007669"/>
    <property type="project" value="InterPro"/>
</dbReference>
<dbReference type="GO" id="GO:0019310">
    <property type="term" value="P:inositol catabolic process"/>
    <property type="evidence" value="ECO:0000318"/>
    <property type="project" value="GO_Central"/>
</dbReference>
<dbReference type="GO" id="GO:0019853">
    <property type="term" value="P:L-ascorbic acid biosynthetic process"/>
    <property type="evidence" value="ECO:0007669"/>
    <property type="project" value="UniProtKB-KW"/>
</dbReference>
<dbReference type="Gene3D" id="1.10.3210.10">
    <property type="entry name" value="Hypothetical protein af1432"/>
    <property type="match status" value="1"/>
</dbReference>
<dbReference type="InterPro" id="IPR007828">
    <property type="entry name" value="Inositol_oxygenase"/>
</dbReference>
<dbReference type="PANTHER" id="PTHR12588:SF12">
    <property type="entry name" value="INOSITOL OXYGENASE 1"/>
    <property type="match status" value="1"/>
</dbReference>
<dbReference type="PANTHER" id="PTHR12588">
    <property type="entry name" value="MYOINOSITOL OXYGENASE"/>
    <property type="match status" value="1"/>
</dbReference>
<dbReference type="Pfam" id="PF05153">
    <property type="entry name" value="MIOX"/>
    <property type="match status" value="1"/>
</dbReference>
<dbReference type="SUPFAM" id="SSF109604">
    <property type="entry name" value="HD-domain/PDEase-like"/>
    <property type="match status" value="1"/>
</dbReference>
<keyword id="KW-0060">Ascorbate biosynthesis</keyword>
<keyword id="KW-0963">Cytoplasm</keyword>
<keyword id="KW-0408">Iron</keyword>
<keyword id="KW-0479">Metal-binding</keyword>
<keyword id="KW-0560">Oxidoreductase</keyword>
<keyword id="KW-1185">Reference proteome</keyword>
<feature type="chain" id="PRO_0000079158" description="Probable inositol oxygenase">
    <location>
        <begin position="1"/>
        <end position="308"/>
    </location>
</feature>
<feature type="binding site" evidence="1">
    <location>
        <position position="49"/>
    </location>
    <ligand>
        <name>substrate</name>
    </ligand>
</feature>
<feature type="binding site" evidence="1">
    <location>
        <begin position="106"/>
        <end position="108"/>
    </location>
    <ligand>
        <name>substrate</name>
    </ligand>
</feature>
<feature type="binding site" evidence="1">
    <location>
        <position position="119"/>
    </location>
    <ligand>
        <name>Fe cation</name>
        <dbReference type="ChEBI" id="CHEBI:24875"/>
        <label>1</label>
    </ligand>
</feature>
<feature type="binding site" evidence="1">
    <location>
        <position position="144"/>
    </location>
    <ligand>
        <name>Fe cation</name>
        <dbReference type="ChEBI" id="CHEBI:24875"/>
        <label>1</label>
    </ligand>
</feature>
<feature type="binding site" evidence="1">
    <location>
        <position position="145"/>
    </location>
    <ligand>
        <name>Fe cation</name>
        <dbReference type="ChEBI" id="CHEBI:24875"/>
        <label>1</label>
    </ligand>
</feature>
<feature type="binding site" evidence="1">
    <location>
        <position position="145"/>
    </location>
    <ligand>
        <name>Fe cation</name>
        <dbReference type="ChEBI" id="CHEBI:24875"/>
        <label>2</label>
    </ligand>
</feature>
<feature type="binding site" evidence="1">
    <location>
        <position position="148"/>
    </location>
    <ligand>
        <name>substrate</name>
    </ligand>
</feature>
<feature type="binding site" evidence="1">
    <location>
        <begin position="165"/>
        <end position="166"/>
    </location>
    <ligand>
        <name>substrate</name>
    </ligand>
</feature>
<feature type="binding site" evidence="1">
    <location>
        <position position="217"/>
    </location>
    <ligand>
        <name>Fe cation</name>
        <dbReference type="ChEBI" id="CHEBI:24875"/>
        <label>2</label>
    </ligand>
</feature>
<feature type="binding site" evidence="1">
    <location>
        <begin position="243"/>
        <end position="244"/>
    </location>
    <ligand>
        <name>substrate</name>
    </ligand>
</feature>
<feature type="binding site" evidence="1">
    <location>
        <position position="243"/>
    </location>
    <ligand>
        <name>Fe cation</name>
        <dbReference type="ChEBI" id="CHEBI:24875"/>
        <label>2</label>
    </ligand>
</feature>
<feature type="binding site" evidence="1">
    <location>
        <position position="276"/>
    </location>
    <ligand>
        <name>Fe cation</name>
        <dbReference type="ChEBI" id="CHEBI:24875"/>
        <label>1</label>
    </ligand>
</feature>
<gene>
    <name type="ordered locus">Os06g0561000</name>
    <name type="ordered locus">LOC_Os06g36560</name>
    <name type="ORF">P0456F09.5</name>
    <name type="ORF">P0528E12.30</name>
</gene>
<protein>
    <recommendedName>
        <fullName>Probable inositol oxygenase</fullName>
        <ecNumber>1.13.99.1</ecNumber>
    </recommendedName>
    <alternativeName>
        <fullName>Myo-inositol oxygenase</fullName>
        <shortName>MI oxygenase</shortName>
    </alternativeName>
</protein>
<name>MIOX_ORYSJ</name>
<evidence type="ECO:0000250" key="1"/>
<evidence type="ECO:0000305" key="2"/>
<proteinExistence type="evidence at transcript level"/>